<keyword id="KW-0378">Hydrolase</keyword>
<keyword id="KW-0546">Nucleotide metabolism</keyword>
<keyword id="KW-0547">Nucleotide-binding</keyword>
<reference key="1">
    <citation type="journal article" date="2005" name="PLoS Biol.">
        <title>The genome sequence of Rickettsia felis identifies the first putative conjugative plasmid in an obligate intracellular parasite.</title>
        <authorList>
            <person name="Ogata H."/>
            <person name="Renesto P."/>
            <person name="Audic S."/>
            <person name="Robert C."/>
            <person name="Blanc G."/>
            <person name="Fournier P.-E."/>
            <person name="Parinello H."/>
            <person name="Claverie J.-M."/>
            <person name="Raoult D."/>
        </authorList>
    </citation>
    <scope>NUCLEOTIDE SEQUENCE [LARGE SCALE GENOMIC DNA]</scope>
    <source>
        <strain>ATCC VR-1525 / URRWXCal2</strain>
    </source>
</reference>
<accession>Q4UNF3</accession>
<sequence>MAIMSDKWIKEAVINQSMIRPFAEKQVRVHNKEKIISYGLSSYGYDARVSNEFKIFTNINSTTVDPKNFSEYNLVDREVDVCIIPPNSFALGRTIEYFKIPRDVLVICVGKSTYARCGIIVNVTPLEPEWEGHVTLEFSNTTPLPAKIYANEGACQFLFLKSDQICDTSYADRQGKYMKQVGVTLPLT</sequence>
<protein>
    <recommendedName>
        <fullName evidence="1">dCTP deaminase</fullName>
        <ecNumber evidence="1">3.5.4.13</ecNumber>
    </recommendedName>
    <alternativeName>
        <fullName evidence="1">Deoxycytidine triphosphate deaminase</fullName>
    </alternativeName>
</protein>
<comment type="function">
    <text evidence="1">Catalyzes the deamination of dCTP to dUTP.</text>
</comment>
<comment type="catalytic activity">
    <reaction evidence="1">
        <text>dCTP + H2O + H(+) = dUTP + NH4(+)</text>
        <dbReference type="Rhea" id="RHEA:22680"/>
        <dbReference type="ChEBI" id="CHEBI:15377"/>
        <dbReference type="ChEBI" id="CHEBI:15378"/>
        <dbReference type="ChEBI" id="CHEBI:28938"/>
        <dbReference type="ChEBI" id="CHEBI:61481"/>
        <dbReference type="ChEBI" id="CHEBI:61555"/>
        <dbReference type="EC" id="3.5.4.13"/>
    </reaction>
</comment>
<comment type="pathway">
    <text evidence="1">Pyrimidine metabolism; dUMP biosynthesis; dUMP from dCTP (dUTP route): step 1/2.</text>
</comment>
<comment type="subunit">
    <text evidence="1">Homotrimer.</text>
</comment>
<comment type="similarity">
    <text evidence="1">Belongs to the dCTP deaminase family.</text>
</comment>
<gene>
    <name evidence="1" type="primary">dcd</name>
    <name type="ordered locus">RF_0054</name>
</gene>
<feature type="chain" id="PRO_0000274885" description="dCTP deaminase">
    <location>
        <begin position="1"/>
        <end position="188"/>
    </location>
</feature>
<feature type="active site" description="Proton donor/acceptor" evidence="1">
    <location>
        <position position="137"/>
    </location>
</feature>
<feature type="binding site" evidence="1">
    <location>
        <begin position="111"/>
        <end position="116"/>
    </location>
    <ligand>
        <name>dCTP</name>
        <dbReference type="ChEBI" id="CHEBI:61481"/>
    </ligand>
</feature>
<feature type="binding site" evidence="1">
    <location>
        <begin position="135"/>
        <end position="137"/>
    </location>
    <ligand>
        <name>dCTP</name>
        <dbReference type="ChEBI" id="CHEBI:61481"/>
    </ligand>
</feature>
<feature type="binding site" evidence="1">
    <location>
        <position position="156"/>
    </location>
    <ligand>
        <name>dCTP</name>
        <dbReference type="ChEBI" id="CHEBI:61481"/>
    </ligand>
</feature>
<feature type="binding site" evidence="1">
    <location>
        <position position="170"/>
    </location>
    <ligand>
        <name>dCTP</name>
        <dbReference type="ChEBI" id="CHEBI:61481"/>
    </ligand>
</feature>
<feature type="binding site" evidence="1">
    <location>
        <position position="179"/>
    </location>
    <ligand>
        <name>dCTP</name>
        <dbReference type="ChEBI" id="CHEBI:61481"/>
    </ligand>
</feature>
<feature type="binding site" evidence="1">
    <location>
        <position position="180"/>
    </location>
    <ligand>
        <name>dCTP</name>
        <dbReference type="ChEBI" id="CHEBI:61481"/>
    </ligand>
</feature>
<organism>
    <name type="scientific">Rickettsia felis (strain ATCC VR-1525 / URRWXCal2)</name>
    <name type="common">Rickettsia azadi</name>
    <dbReference type="NCBI Taxonomy" id="315456"/>
    <lineage>
        <taxon>Bacteria</taxon>
        <taxon>Pseudomonadati</taxon>
        <taxon>Pseudomonadota</taxon>
        <taxon>Alphaproteobacteria</taxon>
        <taxon>Rickettsiales</taxon>
        <taxon>Rickettsiaceae</taxon>
        <taxon>Rickettsieae</taxon>
        <taxon>Rickettsia</taxon>
        <taxon>spotted fever group</taxon>
    </lineage>
</organism>
<name>DCD_RICFE</name>
<evidence type="ECO:0000255" key="1">
    <source>
        <dbReference type="HAMAP-Rule" id="MF_00146"/>
    </source>
</evidence>
<dbReference type="EC" id="3.5.4.13" evidence="1"/>
<dbReference type="EMBL" id="CP000053">
    <property type="protein sequence ID" value="AAY60905.1"/>
    <property type="molecule type" value="Genomic_DNA"/>
</dbReference>
<dbReference type="SMR" id="Q4UNF3"/>
<dbReference type="STRING" id="315456.RF_0054"/>
<dbReference type="KEGG" id="rfe:RF_0054"/>
<dbReference type="eggNOG" id="COG0717">
    <property type="taxonomic scope" value="Bacteria"/>
</dbReference>
<dbReference type="HOGENOM" id="CLU_087476_4_0_5"/>
<dbReference type="OrthoDB" id="9780956at2"/>
<dbReference type="UniPathway" id="UPA00610">
    <property type="reaction ID" value="UER00665"/>
</dbReference>
<dbReference type="Proteomes" id="UP000008548">
    <property type="component" value="Chromosome"/>
</dbReference>
<dbReference type="GO" id="GO:0008829">
    <property type="term" value="F:dCTP deaminase activity"/>
    <property type="evidence" value="ECO:0007669"/>
    <property type="project" value="UniProtKB-UniRule"/>
</dbReference>
<dbReference type="GO" id="GO:0000166">
    <property type="term" value="F:nucleotide binding"/>
    <property type="evidence" value="ECO:0007669"/>
    <property type="project" value="UniProtKB-KW"/>
</dbReference>
<dbReference type="GO" id="GO:0006226">
    <property type="term" value="P:dUMP biosynthetic process"/>
    <property type="evidence" value="ECO:0007669"/>
    <property type="project" value="UniProtKB-UniPathway"/>
</dbReference>
<dbReference type="GO" id="GO:0006229">
    <property type="term" value="P:dUTP biosynthetic process"/>
    <property type="evidence" value="ECO:0007669"/>
    <property type="project" value="UniProtKB-UniRule"/>
</dbReference>
<dbReference type="CDD" id="cd07557">
    <property type="entry name" value="trimeric_dUTPase"/>
    <property type="match status" value="1"/>
</dbReference>
<dbReference type="FunFam" id="2.70.40.10:FF:000001">
    <property type="entry name" value="dCTP deaminase"/>
    <property type="match status" value="1"/>
</dbReference>
<dbReference type="Gene3D" id="2.70.40.10">
    <property type="match status" value="1"/>
</dbReference>
<dbReference type="HAMAP" id="MF_00146">
    <property type="entry name" value="dCTP_deaminase"/>
    <property type="match status" value="1"/>
</dbReference>
<dbReference type="InterPro" id="IPR011962">
    <property type="entry name" value="dCTP_deaminase"/>
</dbReference>
<dbReference type="InterPro" id="IPR036157">
    <property type="entry name" value="dUTPase-like_sf"/>
</dbReference>
<dbReference type="InterPro" id="IPR033704">
    <property type="entry name" value="dUTPase_trimeric"/>
</dbReference>
<dbReference type="NCBIfam" id="TIGR02274">
    <property type="entry name" value="dCTP_deam"/>
    <property type="match status" value="1"/>
</dbReference>
<dbReference type="PANTHER" id="PTHR42680">
    <property type="entry name" value="DCTP DEAMINASE"/>
    <property type="match status" value="1"/>
</dbReference>
<dbReference type="PANTHER" id="PTHR42680:SF3">
    <property type="entry name" value="DCTP DEAMINASE"/>
    <property type="match status" value="1"/>
</dbReference>
<dbReference type="Pfam" id="PF22769">
    <property type="entry name" value="DCD"/>
    <property type="match status" value="1"/>
</dbReference>
<dbReference type="SUPFAM" id="SSF51283">
    <property type="entry name" value="dUTPase-like"/>
    <property type="match status" value="1"/>
</dbReference>
<proteinExistence type="inferred from homology"/>